<gene>
    <name type="primary">PPP1R3D</name>
    <name type="synonym">PPP1R6</name>
</gene>
<organism>
    <name type="scientific">Homo sapiens</name>
    <name type="common">Human</name>
    <dbReference type="NCBI Taxonomy" id="9606"/>
    <lineage>
        <taxon>Eukaryota</taxon>
        <taxon>Metazoa</taxon>
        <taxon>Chordata</taxon>
        <taxon>Craniata</taxon>
        <taxon>Vertebrata</taxon>
        <taxon>Euteleostomi</taxon>
        <taxon>Mammalia</taxon>
        <taxon>Eutheria</taxon>
        <taxon>Euarchontoglires</taxon>
        <taxon>Primates</taxon>
        <taxon>Haplorrhini</taxon>
        <taxon>Catarrhini</taxon>
        <taxon>Hominidae</taxon>
        <taxon>Homo</taxon>
    </lineage>
</organism>
<comment type="function">
    <text>Seems to act as a glycogen-targeting subunit for PP1. PP1 is essential for cell division, and participates in the regulation of glycogen metabolism, muscle contractility and protein synthesis.</text>
</comment>
<comment type="subunit">
    <text evidence="3 4 5">Interacts with PPP1CC catalytic subunit of PP1, and associates with glycogen. Interacts with EPM2A; in the presence of NHLC1/malin the interaction leads to PPP1R3D ubiquitination and autophagic degradation.</text>
</comment>
<comment type="interaction">
    <interactant intactId="EBI-1045661">
        <id>O95685</id>
    </interactant>
    <interactant intactId="EBI-357253">
        <id>P62136</id>
        <label>PPP1CA</label>
    </interactant>
    <organismsDiffer>false</organismsDiffer>
    <experiments>4</experiments>
</comment>
<comment type="interaction">
    <interactant intactId="EBI-1045661">
        <id>O95685</id>
    </interactant>
    <interactant intactId="EBI-347088">
        <id>P63104</id>
        <label>YWHAZ</label>
    </interactant>
    <organismsDiffer>false</organismsDiffer>
    <experiments>3</experiments>
</comment>
<comment type="tissue specificity">
    <text>Expressed in all tissues tested. High expression in skeletal muscle and heart.</text>
</comment>
<comment type="domain">
    <text>The CBM21 domain is known to be involved in the localization to glycogen and is characteristic of some regulatory subunit of phosphatase complexes.</text>
</comment>
<reference key="1">
    <citation type="journal article" date="1997" name="FEBS Lett.">
        <title>PPP1R6, a novel member of the family of glycogen-targeting subunits of protein phosphatase 1.</title>
        <authorList>
            <person name="Armstrong C.G."/>
            <person name="Browne G.J."/>
            <person name="Cohen P."/>
            <person name="Cohen P.T.W."/>
        </authorList>
    </citation>
    <scope>NUCLEOTIDE SEQUENCE [MRNA]</scope>
    <scope>ASSOCIATION WITH GLYCOGEN</scope>
    <scope>INTERACTION WITH PPP1CC</scope>
    <source>
        <tissue>Brain</tissue>
    </source>
</reference>
<reference key="2">
    <citation type="journal article" date="2001" name="Nature">
        <title>The DNA sequence and comparative analysis of human chromosome 20.</title>
        <authorList>
            <person name="Deloukas P."/>
            <person name="Matthews L.H."/>
            <person name="Ashurst J.L."/>
            <person name="Burton J."/>
            <person name="Gilbert J.G.R."/>
            <person name="Jones M."/>
            <person name="Stavrides G."/>
            <person name="Almeida J.P."/>
            <person name="Babbage A.K."/>
            <person name="Bagguley C.L."/>
            <person name="Bailey J."/>
            <person name="Barlow K.F."/>
            <person name="Bates K.N."/>
            <person name="Beard L.M."/>
            <person name="Beare D.M."/>
            <person name="Beasley O.P."/>
            <person name="Bird C.P."/>
            <person name="Blakey S.E."/>
            <person name="Bridgeman A.M."/>
            <person name="Brown A.J."/>
            <person name="Buck D."/>
            <person name="Burrill W.D."/>
            <person name="Butler A.P."/>
            <person name="Carder C."/>
            <person name="Carter N.P."/>
            <person name="Chapman J.C."/>
            <person name="Clamp M."/>
            <person name="Clark G."/>
            <person name="Clark L.N."/>
            <person name="Clark S.Y."/>
            <person name="Clee C.M."/>
            <person name="Clegg S."/>
            <person name="Cobley V.E."/>
            <person name="Collier R.E."/>
            <person name="Connor R.E."/>
            <person name="Corby N.R."/>
            <person name="Coulson A."/>
            <person name="Coville G.J."/>
            <person name="Deadman R."/>
            <person name="Dhami P.D."/>
            <person name="Dunn M."/>
            <person name="Ellington A.G."/>
            <person name="Frankland J.A."/>
            <person name="Fraser A."/>
            <person name="French L."/>
            <person name="Garner P."/>
            <person name="Grafham D.V."/>
            <person name="Griffiths C."/>
            <person name="Griffiths M.N.D."/>
            <person name="Gwilliam R."/>
            <person name="Hall R.E."/>
            <person name="Hammond S."/>
            <person name="Harley J.L."/>
            <person name="Heath P.D."/>
            <person name="Ho S."/>
            <person name="Holden J.L."/>
            <person name="Howden P.J."/>
            <person name="Huckle E."/>
            <person name="Hunt A.R."/>
            <person name="Hunt S.E."/>
            <person name="Jekosch K."/>
            <person name="Johnson C.M."/>
            <person name="Johnson D."/>
            <person name="Kay M.P."/>
            <person name="Kimberley A.M."/>
            <person name="King A."/>
            <person name="Knights A."/>
            <person name="Laird G.K."/>
            <person name="Lawlor S."/>
            <person name="Lehvaeslaiho M.H."/>
            <person name="Leversha M.A."/>
            <person name="Lloyd C."/>
            <person name="Lloyd D.M."/>
            <person name="Lovell J.D."/>
            <person name="Marsh V.L."/>
            <person name="Martin S.L."/>
            <person name="McConnachie L.J."/>
            <person name="McLay K."/>
            <person name="McMurray A.A."/>
            <person name="Milne S.A."/>
            <person name="Mistry D."/>
            <person name="Moore M.J.F."/>
            <person name="Mullikin J.C."/>
            <person name="Nickerson T."/>
            <person name="Oliver K."/>
            <person name="Parker A."/>
            <person name="Patel R."/>
            <person name="Pearce T.A.V."/>
            <person name="Peck A.I."/>
            <person name="Phillimore B.J.C.T."/>
            <person name="Prathalingam S.R."/>
            <person name="Plumb R.W."/>
            <person name="Ramsay H."/>
            <person name="Rice C.M."/>
            <person name="Ross M.T."/>
            <person name="Scott C.E."/>
            <person name="Sehra H.K."/>
            <person name="Shownkeen R."/>
            <person name="Sims S."/>
            <person name="Skuce C.D."/>
            <person name="Smith M.L."/>
            <person name="Soderlund C."/>
            <person name="Steward C.A."/>
            <person name="Sulston J.E."/>
            <person name="Swann R.M."/>
            <person name="Sycamore N."/>
            <person name="Taylor R."/>
            <person name="Tee L."/>
            <person name="Thomas D.W."/>
            <person name="Thorpe A."/>
            <person name="Tracey A."/>
            <person name="Tromans A.C."/>
            <person name="Vaudin M."/>
            <person name="Wall M."/>
            <person name="Wallis J.M."/>
            <person name="Whitehead S.L."/>
            <person name="Whittaker P."/>
            <person name="Willey D.L."/>
            <person name="Williams L."/>
            <person name="Williams S.A."/>
            <person name="Wilming L."/>
            <person name="Wray P.W."/>
            <person name="Hubbard T."/>
            <person name="Durbin R.M."/>
            <person name="Bentley D.R."/>
            <person name="Beck S."/>
            <person name="Rogers J."/>
        </authorList>
    </citation>
    <scope>NUCLEOTIDE SEQUENCE [LARGE SCALE GENOMIC DNA]</scope>
</reference>
<reference key="3">
    <citation type="journal article" date="2004" name="Genome Res.">
        <title>The status, quality, and expansion of the NIH full-length cDNA project: the Mammalian Gene Collection (MGC).</title>
        <authorList>
            <consortium name="The MGC Project Team"/>
        </authorList>
    </citation>
    <scope>NUCLEOTIDE SEQUENCE [LARGE SCALE MRNA]</scope>
    <source>
        <tissue>Lung</tissue>
    </source>
</reference>
<reference key="4">
    <citation type="journal article" date="2006" name="J. Biol. Chem.">
        <title>Laforin, a dual specificity phosphatase that dephosphorylates complex carbohydrates.</title>
        <authorList>
            <person name="Worby C.A."/>
            <person name="Gentry M.S."/>
            <person name="Dixon J.E."/>
        </authorList>
    </citation>
    <scope>INTERACTION WITH EPM2A</scope>
</reference>
<reference key="5">
    <citation type="journal article" date="2008" name="Proc. Natl. Acad. Sci. U.S.A.">
        <title>A quantitative atlas of mitotic phosphorylation.</title>
        <authorList>
            <person name="Dephoure N."/>
            <person name="Zhou C."/>
            <person name="Villen J."/>
            <person name="Beausoleil S.A."/>
            <person name="Bakalarski C.E."/>
            <person name="Elledge S.J."/>
            <person name="Gygi S.P."/>
        </authorList>
    </citation>
    <scope>PHOSPHORYLATION [LARGE SCALE ANALYSIS] AT SER-23; SER-28 AND SER-74</scope>
    <scope>IDENTIFICATION BY MASS SPECTROMETRY [LARGE SCALE ANALYSIS]</scope>
    <source>
        <tissue>Cervix carcinoma</tissue>
    </source>
</reference>
<reference key="6">
    <citation type="journal article" date="2013" name="Int. J. Biochem. Cell Biol.">
        <title>Glycogenic activity of R6, a protein phosphatase 1 regulatory subunit, is modulated by the laforin-malin complex.</title>
        <authorList>
            <person name="Rubio-Villena C."/>
            <person name="Garcia-Gimeno M.A."/>
            <person name="Sanz P."/>
        </authorList>
    </citation>
    <scope>INTERACTION WITH EPM2A</scope>
</reference>
<reference key="7">
    <citation type="journal article" date="2013" name="J. Proteome Res.">
        <title>Toward a comprehensive characterization of a human cancer cell phosphoproteome.</title>
        <authorList>
            <person name="Zhou H."/>
            <person name="Di Palma S."/>
            <person name="Preisinger C."/>
            <person name="Peng M."/>
            <person name="Polat A.N."/>
            <person name="Heck A.J."/>
            <person name="Mohammed S."/>
        </authorList>
    </citation>
    <scope>PHOSPHORYLATION [LARGE SCALE ANALYSIS] AT SER-25 AND SER-133</scope>
    <scope>IDENTIFICATION BY MASS SPECTROMETRY [LARGE SCALE ANALYSIS]</scope>
    <source>
        <tissue>Cervix carcinoma</tissue>
        <tissue>Erythroleukemia</tissue>
    </source>
</reference>
<accession>O95685</accession>
<accession>Q6DK02</accession>
<protein>
    <recommendedName>
        <fullName>Protein phosphatase 1 regulatory subunit 3D</fullName>
    </recommendedName>
    <alternativeName>
        <fullName>Protein phosphatase 1 regulatory subunit 6</fullName>
        <shortName>PP1 subunit R6</shortName>
    </alternativeName>
    <alternativeName>
        <fullName>Protein phosphatase 1-binding subunit R6</fullName>
    </alternativeName>
</protein>
<name>PPR3D_HUMAN</name>
<keyword id="KW-0119">Carbohydrate metabolism</keyword>
<keyword id="KW-0321">Glycogen metabolism</keyword>
<keyword id="KW-0597">Phosphoprotein</keyword>
<keyword id="KW-1267">Proteomics identification</keyword>
<keyword id="KW-1185">Reference proteome</keyword>
<sequence length="299" mass="32559">MSRGPSSAVLPSALGSRKLGPRSLSCLSDLDGGVALEPRACRPPGSPGRAPPPTPAPSGCDPRLRPIILRRARSLPSSPERRQKAAGAPGAACRPGCSQKLRVRFADALGLELAQVKVFNAGDDPSVPLHVLSRLAINSDLCCSSQDLEFTLHCLVPDFPPPVEAADFGERLQRQLVCLERVTCSDLGISGTVRVCNVAFEKQVAVRYTFSGWRSTHEAVARWRGPAGPEGTEDVFTFGFPVPPFLLELGSRVHFAVRYQVAGAEYWDNNDHRDYSLTCRNHALHMPRGECEESWIHFI</sequence>
<dbReference type="EMBL" id="Y18206">
    <property type="protein sequence ID" value="CAA77081.1"/>
    <property type="molecule type" value="mRNA"/>
</dbReference>
<dbReference type="EMBL" id="AL109928">
    <property type="status" value="NOT_ANNOTATED_CDS"/>
    <property type="molecule type" value="Genomic_DNA"/>
</dbReference>
<dbReference type="EMBL" id="BC074860">
    <property type="protein sequence ID" value="AAH74860.2"/>
    <property type="molecule type" value="mRNA"/>
</dbReference>
<dbReference type="EMBL" id="BC074861">
    <property type="protein sequence ID" value="AAH74861.2"/>
    <property type="molecule type" value="mRNA"/>
</dbReference>
<dbReference type="CCDS" id="CCDS13483.1"/>
<dbReference type="RefSeq" id="NP_006233.1">
    <property type="nucleotide sequence ID" value="NM_006242.4"/>
</dbReference>
<dbReference type="SMR" id="O95685"/>
<dbReference type="BioGRID" id="111501">
    <property type="interactions" value="23"/>
</dbReference>
<dbReference type="FunCoup" id="O95685">
    <property type="interactions" value="229"/>
</dbReference>
<dbReference type="IntAct" id="O95685">
    <property type="interactions" value="19"/>
</dbReference>
<dbReference type="MINT" id="O95685"/>
<dbReference type="STRING" id="9606.ENSP00000360035"/>
<dbReference type="CAZy" id="CBM21">
    <property type="family name" value="Carbohydrate-Binding Module Family 21"/>
</dbReference>
<dbReference type="GlyGen" id="O95685">
    <property type="glycosylation" value="1 site"/>
</dbReference>
<dbReference type="iPTMnet" id="O95685"/>
<dbReference type="PhosphoSitePlus" id="O95685"/>
<dbReference type="BioMuta" id="PPP1R3D"/>
<dbReference type="jPOST" id="O95685"/>
<dbReference type="MassIVE" id="O95685"/>
<dbReference type="PaxDb" id="9606-ENSP00000360035"/>
<dbReference type="PeptideAtlas" id="O95685"/>
<dbReference type="ProteomicsDB" id="50999"/>
<dbReference type="Pumba" id="O95685"/>
<dbReference type="Antibodypedia" id="48192">
    <property type="antibodies" value="18 antibodies from 13 providers"/>
</dbReference>
<dbReference type="DNASU" id="5509"/>
<dbReference type="Ensembl" id="ENST00000370996.5">
    <property type="protein sequence ID" value="ENSP00000360035.3"/>
    <property type="gene ID" value="ENSG00000132825.7"/>
</dbReference>
<dbReference type="GeneID" id="5509"/>
<dbReference type="KEGG" id="hsa:5509"/>
<dbReference type="MANE-Select" id="ENST00000370996.5">
    <property type="protein sequence ID" value="ENSP00000360035.3"/>
    <property type="RefSeq nucleotide sequence ID" value="NM_006242.4"/>
    <property type="RefSeq protein sequence ID" value="NP_006233.1"/>
</dbReference>
<dbReference type="UCSC" id="uc002ybb.4">
    <property type="organism name" value="human"/>
</dbReference>
<dbReference type="AGR" id="HGNC:9294"/>
<dbReference type="CTD" id="5509"/>
<dbReference type="DisGeNET" id="5509"/>
<dbReference type="GeneCards" id="PPP1R3D"/>
<dbReference type="HGNC" id="HGNC:9294">
    <property type="gene designation" value="PPP1R3D"/>
</dbReference>
<dbReference type="HPA" id="ENSG00000132825">
    <property type="expression patterns" value="Low tissue specificity"/>
</dbReference>
<dbReference type="MIM" id="603326">
    <property type="type" value="gene"/>
</dbReference>
<dbReference type="neXtProt" id="NX_O95685"/>
<dbReference type="OpenTargets" id="ENSG00000132825"/>
<dbReference type="PharmGKB" id="PA33654"/>
<dbReference type="VEuPathDB" id="HostDB:ENSG00000132825"/>
<dbReference type="eggNOG" id="KOG3986">
    <property type="taxonomic scope" value="Eukaryota"/>
</dbReference>
<dbReference type="GeneTree" id="ENSGT00940000161921"/>
<dbReference type="HOGENOM" id="CLU_040215_0_1_1"/>
<dbReference type="InParanoid" id="O95685"/>
<dbReference type="OMA" id="CLEQVVC"/>
<dbReference type="OrthoDB" id="1881at2759"/>
<dbReference type="PAN-GO" id="O95685">
    <property type="GO annotations" value="4 GO annotations based on evolutionary models"/>
</dbReference>
<dbReference type="PhylomeDB" id="O95685"/>
<dbReference type="TreeFam" id="TF105537"/>
<dbReference type="PathwayCommons" id="O95685"/>
<dbReference type="SignaLink" id="O95685"/>
<dbReference type="BioGRID-ORCS" id="5509">
    <property type="hits" value="13 hits in 1159 CRISPR screens"/>
</dbReference>
<dbReference type="GenomeRNAi" id="5509"/>
<dbReference type="Pharos" id="O95685">
    <property type="development level" value="Tdark"/>
</dbReference>
<dbReference type="PRO" id="PR:O95685"/>
<dbReference type="Proteomes" id="UP000005640">
    <property type="component" value="Chromosome 20"/>
</dbReference>
<dbReference type="RNAct" id="O95685">
    <property type="molecule type" value="protein"/>
</dbReference>
<dbReference type="Bgee" id="ENSG00000132825">
    <property type="expression patterns" value="Expressed in secondary oocyte and 184 other cell types or tissues"/>
</dbReference>
<dbReference type="GO" id="GO:0042587">
    <property type="term" value="C:glycogen granule"/>
    <property type="evidence" value="ECO:0007669"/>
    <property type="project" value="Ensembl"/>
</dbReference>
<dbReference type="GO" id="GO:0000164">
    <property type="term" value="C:protein phosphatase type 1 complex"/>
    <property type="evidence" value="ECO:0000318"/>
    <property type="project" value="GO_Central"/>
</dbReference>
<dbReference type="GO" id="GO:2001069">
    <property type="term" value="F:glycogen binding"/>
    <property type="evidence" value="ECO:0000318"/>
    <property type="project" value="GO_Central"/>
</dbReference>
<dbReference type="GO" id="GO:0008157">
    <property type="term" value="F:protein phosphatase 1 binding"/>
    <property type="evidence" value="ECO:0000318"/>
    <property type="project" value="GO_Central"/>
</dbReference>
<dbReference type="GO" id="GO:0004722">
    <property type="term" value="F:protein serine/threonine phosphatase activity"/>
    <property type="evidence" value="ECO:0000304"/>
    <property type="project" value="ProtInc"/>
</dbReference>
<dbReference type="GO" id="GO:0005977">
    <property type="term" value="P:glycogen metabolic process"/>
    <property type="evidence" value="ECO:0007669"/>
    <property type="project" value="UniProtKB-KW"/>
</dbReference>
<dbReference type="GO" id="GO:0005979">
    <property type="term" value="P:regulation of glycogen biosynthetic process"/>
    <property type="evidence" value="ECO:0000318"/>
    <property type="project" value="GO_Central"/>
</dbReference>
<dbReference type="GO" id="GO:0005981">
    <property type="term" value="P:regulation of glycogen catabolic process"/>
    <property type="evidence" value="ECO:0007669"/>
    <property type="project" value="Ensembl"/>
</dbReference>
<dbReference type="FunFam" id="2.60.40.2440:FF:000002">
    <property type="entry name" value="Protein phosphatase 1 regulatory subunit 3E"/>
    <property type="match status" value="1"/>
</dbReference>
<dbReference type="Gene3D" id="2.60.40.2440">
    <property type="entry name" value="Carbohydrate binding type-21 domain"/>
    <property type="match status" value="1"/>
</dbReference>
<dbReference type="InterPro" id="IPR005036">
    <property type="entry name" value="CBM21_dom"/>
</dbReference>
<dbReference type="InterPro" id="IPR038175">
    <property type="entry name" value="CBM21_dom_sf"/>
</dbReference>
<dbReference type="InterPro" id="IPR017434">
    <property type="entry name" value="Pase-1_reg-su_3B/C/D_met"/>
</dbReference>
<dbReference type="InterPro" id="IPR050782">
    <property type="entry name" value="PP1_regulatory_subunit_3"/>
</dbReference>
<dbReference type="PANTHER" id="PTHR12307">
    <property type="entry name" value="PROTEIN PHOSPHATASE 1 REGULATORY SUBUNIT"/>
    <property type="match status" value="1"/>
</dbReference>
<dbReference type="PANTHER" id="PTHR12307:SF4">
    <property type="entry name" value="PROTEIN PHOSPHATASE 1 REGULATORY SUBUNIT 3D"/>
    <property type="match status" value="1"/>
</dbReference>
<dbReference type="Pfam" id="PF03370">
    <property type="entry name" value="CBM_21"/>
    <property type="match status" value="1"/>
</dbReference>
<dbReference type="PIRSF" id="PIRSF038207">
    <property type="entry name" value="PP1_GT_animal"/>
    <property type="match status" value="1"/>
</dbReference>
<dbReference type="PROSITE" id="PS51159">
    <property type="entry name" value="CBM21"/>
    <property type="match status" value="1"/>
</dbReference>
<evidence type="ECO:0000255" key="1">
    <source>
        <dbReference type="PROSITE-ProRule" id="PRU00491"/>
    </source>
</evidence>
<evidence type="ECO:0000256" key="2">
    <source>
        <dbReference type="SAM" id="MobiDB-lite"/>
    </source>
</evidence>
<evidence type="ECO:0000269" key="3">
    <source>
    </source>
</evidence>
<evidence type="ECO:0000269" key="4">
    <source>
    </source>
</evidence>
<evidence type="ECO:0000269" key="5">
    <source>
    </source>
</evidence>
<evidence type="ECO:0007744" key="6">
    <source>
    </source>
</evidence>
<evidence type="ECO:0007744" key="7">
    <source>
    </source>
</evidence>
<feature type="chain" id="PRO_0000071503" description="Protein phosphatase 1 regulatory subunit 3D">
    <location>
        <begin position="1"/>
        <end position="299"/>
    </location>
</feature>
<feature type="domain" description="CBM21" evidence="1">
    <location>
        <begin position="169"/>
        <end position="278"/>
    </location>
</feature>
<feature type="region of interest" description="Disordered" evidence="2">
    <location>
        <begin position="1"/>
        <end position="22"/>
    </location>
</feature>
<feature type="region of interest" description="Disordered" evidence="2">
    <location>
        <begin position="37"/>
        <end position="94"/>
    </location>
</feature>
<feature type="short sequence motif" description="PP1-binding motif">
    <location>
        <begin position="101"/>
        <end position="104"/>
    </location>
</feature>
<feature type="compositionally biased region" description="Pro residues" evidence="2">
    <location>
        <begin position="44"/>
        <end position="56"/>
    </location>
</feature>
<feature type="compositionally biased region" description="Low complexity" evidence="2">
    <location>
        <begin position="57"/>
        <end position="67"/>
    </location>
</feature>
<feature type="compositionally biased region" description="Low complexity" evidence="2">
    <location>
        <begin position="85"/>
        <end position="94"/>
    </location>
</feature>
<feature type="modified residue" description="Phosphoserine" evidence="6">
    <location>
        <position position="23"/>
    </location>
</feature>
<feature type="modified residue" description="Phosphoserine" evidence="7">
    <location>
        <position position="25"/>
    </location>
</feature>
<feature type="modified residue" description="Phosphoserine" evidence="6">
    <location>
        <position position="28"/>
    </location>
</feature>
<feature type="modified residue" description="Phosphoserine" evidence="6">
    <location>
        <position position="74"/>
    </location>
</feature>
<feature type="modified residue" description="Phosphoserine" evidence="7">
    <location>
        <position position="133"/>
    </location>
</feature>
<proteinExistence type="evidence at protein level"/>